<proteinExistence type="evidence at transcript level"/>
<protein>
    <recommendedName>
        <fullName>Metal tolerance protein A2</fullName>
        <shortName>AtMTP3</shortName>
        <shortName>AtMTPa2</shortName>
    </recommendedName>
</protein>
<sequence length="393" mass="42928">MVTPKLHLDLSLTKKMKDHIHEHDHMVQICGEVSSGETSLVGIKKTCGEAPCGFSDAKTSSIEAQERAASMRKLLIAVLLCAIFIVVEVVGGIKANSLAILTDAAHLLSDVAAFAISLFSLWASGWKANPQQSYGFFRIEILGALVSIQMIWLLAGILVYEAIVRLNNGSGEVEGSLMFAVSAVGLLVNIAMAILLGHDHGHGHGHSHDNGHGHSHDHGHGIAATEHHHDSGHDESQLSDVLIEQKKQRNVNIQGAYLHVLGDSIQSVGVMIGGAIIWYKPEWKILDLICTLVFSVIVLGTTIGMLRNILEVLMESTPREIDPTMLEKGVCEIEEVVAVHELHIWAITVGKLLLACHVKIRPEAEADMVLDKIIDYIKREHNISHVTIQIERQ</sequence>
<evidence type="ECO:0000250" key="1"/>
<evidence type="ECO:0000255" key="2"/>
<evidence type="ECO:0000256" key="3">
    <source>
        <dbReference type="SAM" id="MobiDB-lite"/>
    </source>
</evidence>
<evidence type="ECO:0000269" key="4">
    <source>
    </source>
</evidence>
<evidence type="ECO:0000305" key="5"/>
<feature type="chain" id="PRO_0000206118" description="Metal tolerance protein A2">
    <location>
        <begin position="1"/>
        <end position="393"/>
    </location>
</feature>
<feature type="topological domain" description="Cytoplasmic" evidence="2">
    <location>
        <begin position="1"/>
        <end position="72"/>
    </location>
</feature>
<feature type="transmembrane region" description="Helical" evidence="2">
    <location>
        <begin position="73"/>
        <end position="93"/>
    </location>
</feature>
<feature type="topological domain" description="Vacuolar" evidence="2">
    <location>
        <begin position="94"/>
        <end position="105"/>
    </location>
</feature>
<feature type="transmembrane region" description="Helical" evidence="2">
    <location>
        <begin position="106"/>
        <end position="126"/>
    </location>
</feature>
<feature type="topological domain" description="Cytoplasmic" evidence="2">
    <location>
        <begin position="127"/>
        <end position="138"/>
    </location>
</feature>
<feature type="transmembrane region" description="Helical" evidence="2">
    <location>
        <begin position="139"/>
        <end position="159"/>
    </location>
</feature>
<feature type="topological domain" description="Vacuolar" evidence="2">
    <location>
        <begin position="160"/>
        <end position="176"/>
    </location>
</feature>
<feature type="transmembrane region" description="Helical" evidence="2">
    <location>
        <begin position="177"/>
        <end position="197"/>
    </location>
</feature>
<feature type="topological domain" description="Cytoplasmic" evidence="2">
    <location>
        <begin position="198"/>
        <end position="257"/>
    </location>
</feature>
<feature type="transmembrane region" description="Helical" evidence="2">
    <location>
        <begin position="258"/>
        <end position="278"/>
    </location>
</feature>
<feature type="topological domain" description="Vacuolar" evidence="2">
    <location>
        <begin position="279"/>
        <end position="284"/>
    </location>
</feature>
<feature type="transmembrane region" description="Helical" evidence="2">
    <location>
        <begin position="285"/>
        <end position="305"/>
    </location>
</feature>
<feature type="topological domain" description="Cytoplasmic" evidence="2">
    <location>
        <begin position="306"/>
        <end position="393"/>
    </location>
</feature>
<feature type="region of interest" description="Required for zinc-binding" evidence="1">
    <location>
        <begin position="198"/>
        <end position="233"/>
    </location>
</feature>
<feature type="region of interest" description="Disordered" evidence="3">
    <location>
        <begin position="202"/>
        <end position="237"/>
    </location>
</feature>
<feature type="compositionally biased region" description="Basic and acidic residues" evidence="3">
    <location>
        <begin position="202"/>
        <end position="236"/>
    </location>
</feature>
<comment type="function">
    <text evidence="4">Involved in sequestration of excess zinc in the cytoplasm into vacuoles to maintain zinc homeostasis.</text>
</comment>
<comment type="subcellular location">
    <subcellularLocation>
        <location evidence="2">Membrane</location>
        <topology evidence="2">Multi-pass membrane protein</topology>
    </subcellularLocation>
</comment>
<comment type="alternative products">
    <event type="alternative splicing"/>
    <isoform>
        <id>Q9LXS1-1</id>
        <name>1</name>
        <sequence type="displayed"/>
    </isoform>
    <text>A number of isoforms are produced. According to EST sequences.</text>
</comment>
<comment type="similarity">
    <text evidence="5">Belongs to the cation diffusion facilitator (CDF) transporter (TC 2.A.4) family. SLC30A subfamily.</text>
</comment>
<comment type="sequence caution" evidence="5">
    <conflict type="erroneous gene model prediction">
        <sequence resource="EMBL-CDS" id="CAB88298"/>
    </conflict>
</comment>
<comment type="sequence caution" evidence="5">
    <conflict type="erroneous initiation">
        <sequence resource="EMBL-CDS" id="CAJ80833"/>
    </conflict>
    <text>Truncated N-terminus.</text>
</comment>
<keyword id="KW-0025">Alternative splicing</keyword>
<keyword id="KW-0406">Ion transport</keyword>
<keyword id="KW-0472">Membrane</keyword>
<keyword id="KW-0479">Metal-binding</keyword>
<keyword id="KW-1185">Reference proteome</keyword>
<keyword id="KW-0812">Transmembrane</keyword>
<keyword id="KW-1133">Transmembrane helix</keyword>
<keyword id="KW-0813">Transport</keyword>
<keyword id="KW-0862">Zinc</keyword>
<keyword id="KW-0864">Zinc transport</keyword>
<name>MTPA2_ARATH</name>
<organism>
    <name type="scientific">Arabidopsis thaliana</name>
    <name type="common">Mouse-ear cress</name>
    <dbReference type="NCBI Taxonomy" id="3702"/>
    <lineage>
        <taxon>Eukaryota</taxon>
        <taxon>Viridiplantae</taxon>
        <taxon>Streptophyta</taxon>
        <taxon>Embryophyta</taxon>
        <taxon>Tracheophyta</taxon>
        <taxon>Spermatophyta</taxon>
        <taxon>Magnoliopsida</taxon>
        <taxon>eudicotyledons</taxon>
        <taxon>Gunneridae</taxon>
        <taxon>Pentapetalae</taxon>
        <taxon>rosids</taxon>
        <taxon>malvids</taxon>
        <taxon>Brassicales</taxon>
        <taxon>Brassicaceae</taxon>
        <taxon>Camelineae</taxon>
        <taxon>Arabidopsis</taxon>
    </lineage>
</organism>
<reference key="1">
    <citation type="journal article" date="2000" name="Nature">
        <title>Sequence and analysis of chromosome 3 of the plant Arabidopsis thaliana.</title>
        <authorList>
            <person name="Salanoubat M."/>
            <person name="Lemcke K."/>
            <person name="Rieger M."/>
            <person name="Ansorge W."/>
            <person name="Unseld M."/>
            <person name="Fartmann B."/>
            <person name="Valle G."/>
            <person name="Bloecker H."/>
            <person name="Perez-Alonso M."/>
            <person name="Obermaier B."/>
            <person name="Delseny M."/>
            <person name="Boutry M."/>
            <person name="Grivell L.A."/>
            <person name="Mache R."/>
            <person name="Puigdomenech P."/>
            <person name="De Simone V."/>
            <person name="Choisne N."/>
            <person name="Artiguenave F."/>
            <person name="Robert C."/>
            <person name="Brottier P."/>
            <person name="Wincker P."/>
            <person name="Cattolico L."/>
            <person name="Weissenbach J."/>
            <person name="Saurin W."/>
            <person name="Quetier F."/>
            <person name="Schaefer M."/>
            <person name="Mueller-Auer S."/>
            <person name="Gabel C."/>
            <person name="Fuchs M."/>
            <person name="Benes V."/>
            <person name="Wurmbach E."/>
            <person name="Drzonek H."/>
            <person name="Erfle H."/>
            <person name="Jordan N."/>
            <person name="Bangert S."/>
            <person name="Wiedelmann R."/>
            <person name="Kranz H."/>
            <person name="Voss H."/>
            <person name="Holland R."/>
            <person name="Brandt P."/>
            <person name="Nyakatura G."/>
            <person name="Vezzi A."/>
            <person name="D'Angelo M."/>
            <person name="Pallavicini A."/>
            <person name="Toppo S."/>
            <person name="Simionati B."/>
            <person name="Conrad A."/>
            <person name="Hornischer K."/>
            <person name="Kauer G."/>
            <person name="Loehnert T.-H."/>
            <person name="Nordsiek G."/>
            <person name="Reichelt J."/>
            <person name="Scharfe M."/>
            <person name="Schoen O."/>
            <person name="Bargues M."/>
            <person name="Terol J."/>
            <person name="Climent J."/>
            <person name="Navarro P."/>
            <person name="Collado C."/>
            <person name="Perez-Perez A."/>
            <person name="Ottenwaelder B."/>
            <person name="Duchemin D."/>
            <person name="Cooke R."/>
            <person name="Laudie M."/>
            <person name="Berger-Llauro C."/>
            <person name="Purnelle B."/>
            <person name="Masuy D."/>
            <person name="de Haan M."/>
            <person name="Maarse A.C."/>
            <person name="Alcaraz J.-P."/>
            <person name="Cottet A."/>
            <person name="Casacuberta E."/>
            <person name="Monfort A."/>
            <person name="Argiriou A."/>
            <person name="Flores M."/>
            <person name="Liguori R."/>
            <person name="Vitale D."/>
            <person name="Mannhaupt G."/>
            <person name="Haase D."/>
            <person name="Schoof H."/>
            <person name="Rudd S."/>
            <person name="Zaccaria P."/>
            <person name="Mewes H.-W."/>
            <person name="Mayer K.F.X."/>
            <person name="Kaul S."/>
            <person name="Town C.D."/>
            <person name="Koo H.L."/>
            <person name="Tallon L.J."/>
            <person name="Jenkins J."/>
            <person name="Rooney T."/>
            <person name="Rizzo M."/>
            <person name="Walts A."/>
            <person name="Utterback T."/>
            <person name="Fujii C.Y."/>
            <person name="Shea T.P."/>
            <person name="Creasy T.H."/>
            <person name="Haas B."/>
            <person name="Maiti R."/>
            <person name="Wu D."/>
            <person name="Peterson J."/>
            <person name="Van Aken S."/>
            <person name="Pai G."/>
            <person name="Militscher J."/>
            <person name="Sellers P."/>
            <person name="Gill J.E."/>
            <person name="Feldblyum T.V."/>
            <person name="Preuss D."/>
            <person name="Lin X."/>
            <person name="Nierman W.C."/>
            <person name="Salzberg S.L."/>
            <person name="White O."/>
            <person name="Venter J.C."/>
            <person name="Fraser C.M."/>
            <person name="Kaneko T."/>
            <person name="Nakamura Y."/>
            <person name="Sato S."/>
            <person name="Kato T."/>
            <person name="Asamizu E."/>
            <person name="Sasamoto S."/>
            <person name="Kimura T."/>
            <person name="Idesawa K."/>
            <person name="Kawashima K."/>
            <person name="Kishida Y."/>
            <person name="Kiyokawa C."/>
            <person name="Kohara M."/>
            <person name="Matsumoto M."/>
            <person name="Matsuno A."/>
            <person name="Muraki A."/>
            <person name="Nakayama S."/>
            <person name="Nakazaki N."/>
            <person name="Shinpo S."/>
            <person name="Takeuchi C."/>
            <person name="Wada T."/>
            <person name="Watanabe A."/>
            <person name="Yamada M."/>
            <person name="Yasuda M."/>
            <person name="Tabata S."/>
        </authorList>
    </citation>
    <scope>NUCLEOTIDE SEQUENCE [LARGE SCALE GENOMIC DNA]</scope>
    <source>
        <strain>cv. Columbia</strain>
    </source>
</reference>
<reference key="2">
    <citation type="journal article" date="2017" name="Plant J.">
        <title>Araport11: a complete reannotation of the Arabidopsis thaliana reference genome.</title>
        <authorList>
            <person name="Cheng C.Y."/>
            <person name="Krishnakumar V."/>
            <person name="Chan A.P."/>
            <person name="Thibaud-Nissen F."/>
            <person name="Schobel S."/>
            <person name="Town C.D."/>
        </authorList>
    </citation>
    <scope>GENOME REANNOTATION</scope>
    <source>
        <strain>cv. Columbia</strain>
    </source>
</reference>
<reference key="3">
    <citation type="journal article" date="2006" name="Plant J.">
        <title>The Arabidopsis metal tolerance protein AtMTP3 maintains metal homeostasis by mediating Zn exclusion from the shoot under Fe deficiency and Zn oversupply.</title>
        <authorList>
            <person name="Arrivault S."/>
            <person name="Senger T."/>
            <person name="Kraemer U."/>
        </authorList>
    </citation>
    <scope>NUCLEOTIDE SEQUENCE [MRNA] OF 3-393</scope>
    <scope>FUNCTION</scope>
</reference>
<reference key="4">
    <citation type="journal article" date="2001" name="Plant Physiol.">
        <title>Phylogenetic relationships within cation transporter families of Arabidopsis.</title>
        <authorList>
            <person name="Maeser P."/>
            <person name="Thomine S."/>
            <person name="Schroeder J.I."/>
            <person name="Ward J.M."/>
            <person name="Hirschi K."/>
            <person name="Sze H."/>
            <person name="Talke I.N."/>
            <person name="Amtmann A."/>
            <person name="Maathuis F.J.M."/>
            <person name="Sanders D."/>
            <person name="Harper J.F."/>
            <person name="Tchieu J."/>
            <person name="Gribskov M."/>
            <person name="Persans M.W."/>
            <person name="Salt D.E."/>
            <person name="Kim S.A."/>
            <person name="Guerinot M.L."/>
        </authorList>
    </citation>
    <scope>GENE FAMILY</scope>
    <scope>NOMENCLATURE</scope>
</reference>
<accession>Q9LXS1</accession>
<accession>Q1H8W9</accession>
<gene>
    <name type="primary">MTPA2</name>
    <name type="synonym">MTP3</name>
    <name type="ordered locus">At3g58810</name>
    <name type="ORF">T20N10_160</name>
</gene>
<dbReference type="EMBL" id="AL353032">
    <property type="protein sequence ID" value="CAB88298.1"/>
    <property type="status" value="ALT_SEQ"/>
    <property type="molecule type" value="Genomic_DNA"/>
</dbReference>
<dbReference type="EMBL" id="CP002686">
    <property type="protein sequence ID" value="AEE79835.1"/>
    <property type="molecule type" value="Genomic_DNA"/>
</dbReference>
<dbReference type="EMBL" id="AM231755">
    <property type="protein sequence ID" value="CAJ80833.1"/>
    <property type="status" value="ALT_INIT"/>
    <property type="molecule type" value="mRNA"/>
</dbReference>
<dbReference type="PIR" id="T49164">
    <property type="entry name" value="T49164"/>
</dbReference>
<dbReference type="RefSeq" id="NP_974456.1">
    <molecule id="Q9LXS1-1"/>
    <property type="nucleotide sequence ID" value="NM_202727.3"/>
</dbReference>
<dbReference type="SMR" id="Q9LXS1"/>
<dbReference type="BioGRID" id="10365">
    <property type="interactions" value="1"/>
</dbReference>
<dbReference type="FunCoup" id="Q9LXS1">
    <property type="interactions" value="416"/>
</dbReference>
<dbReference type="STRING" id="3702.Q9LXS1"/>
<dbReference type="PaxDb" id="3702-AT3G58810.1"/>
<dbReference type="ProteomicsDB" id="250981">
    <molecule id="Q9LXS1-1"/>
</dbReference>
<dbReference type="EnsemblPlants" id="AT3G58810.2">
    <molecule id="Q9LXS1-1"/>
    <property type="protein sequence ID" value="AT3G58810.2"/>
    <property type="gene ID" value="AT3G58810"/>
</dbReference>
<dbReference type="GeneID" id="825050"/>
<dbReference type="Gramene" id="AT3G58810.2">
    <molecule id="Q9LXS1-1"/>
    <property type="protein sequence ID" value="AT3G58810.2"/>
    <property type="gene ID" value="AT3G58810"/>
</dbReference>
<dbReference type="KEGG" id="ath:AT3G58810"/>
<dbReference type="Araport" id="AT3G58810"/>
<dbReference type="TAIR" id="AT3G58810">
    <property type="gene designation" value="MTPA2"/>
</dbReference>
<dbReference type="eggNOG" id="KOG1482">
    <property type="taxonomic scope" value="Eukaryota"/>
</dbReference>
<dbReference type="HOGENOM" id="CLU_013430_0_1_1"/>
<dbReference type="InParanoid" id="Q9LXS1"/>
<dbReference type="OMA" id="RATKMYA"/>
<dbReference type="PRO" id="PR:Q9LXS1"/>
<dbReference type="Proteomes" id="UP000006548">
    <property type="component" value="Chromosome 3"/>
</dbReference>
<dbReference type="ExpressionAtlas" id="Q9LXS1">
    <property type="expression patterns" value="baseline and differential"/>
</dbReference>
<dbReference type="GO" id="GO:0016020">
    <property type="term" value="C:membrane"/>
    <property type="evidence" value="ECO:0007669"/>
    <property type="project" value="UniProtKB-SubCell"/>
</dbReference>
<dbReference type="GO" id="GO:0046872">
    <property type="term" value="F:metal ion binding"/>
    <property type="evidence" value="ECO:0007669"/>
    <property type="project" value="UniProtKB-KW"/>
</dbReference>
<dbReference type="GO" id="GO:0008324">
    <property type="term" value="F:monoatomic cation transmembrane transporter activity"/>
    <property type="evidence" value="ECO:0007669"/>
    <property type="project" value="InterPro"/>
</dbReference>
<dbReference type="GO" id="GO:0006829">
    <property type="term" value="P:zinc ion transport"/>
    <property type="evidence" value="ECO:0007669"/>
    <property type="project" value="UniProtKB-KW"/>
</dbReference>
<dbReference type="Gene3D" id="1.20.1510.10">
    <property type="entry name" value="Cation efflux protein transmembrane domain"/>
    <property type="match status" value="1"/>
</dbReference>
<dbReference type="InterPro" id="IPR002524">
    <property type="entry name" value="Cation_efflux"/>
</dbReference>
<dbReference type="InterPro" id="IPR036837">
    <property type="entry name" value="Cation_efflux_CTD_sf"/>
</dbReference>
<dbReference type="InterPro" id="IPR027469">
    <property type="entry name" value="Cation_efflux_TMD_sf"/>
</dbReference>
<dbReference type="InterPro" id="IPR050681">
    <property type="entry name" value="CDF/SLC30A"/>
</dbReference>
<dbReference type="NCBIfam" id="TIGR01297">
    <property type="entry name" value="CDF"/>
    <property type="match status" value="1"/>
</dbReference>
<dbReference type="PANTHER" id="PTHR11562">
    <property type="entry name" value="CATION EFFLUX PROTEIN/ ZINC TRANSPORTER"/>
    <property type="match status" value="1"/>
</dbReference>
<dbReference type="PANTHER" id="PTHR11562:SF100">
    <property type="entry name" value="METAL TOLERANCE PROTEIN A2"/>
    <property type="match status" value="1"/>
</dbReference>
<dbReference type="Pfam" id="PF01545">
    <property type="entry name" value="Cation_efflux"/>
    <property type="match status" value="1"/>
</dbReference>
<dbReference type="SUPFAM" id="SSF160240">
    <property type="entry name" value="Cation efflux protein cytoplasmic domain-like"/>
    <property type="match status" value="1"/>
</dbReference>
<dbReference type="SUPFAM" id="SSF161111">
    <property type="entry name" value="Cation efflux protein transmembrane domain-like"/>
    <property type="match status" value="1"/>
</dbReference>